<feature type="initiator methionine" description="Removed" evidence="1">
    <location>
        <position position="1"/>
    </location>
</feature>
<feature type="chain" id="PRO_0000088185" description="Tyrosine-protein kinase Yes">
    <location>
        <begin position="2"/>
        <end position="544"/>
    </location>
</feature>
<feature type="domain" description="SH3" evidence="4">
    <location>
        <begin position="92"/>
        <end position="153"/>
    </location>
</feature>
<feature type="domain" description="SH2" evidence="3">
    <location>
        <begin position="159"/>
        <end position="256"/>
    </location>
</feature>
<feature type="domain" description="Protein kinase" evidence="2">
    <location>
        <begin position="278"/>
        <end position="531"/>
    </location>
</feature>
<feature type="active site" description="Proton acceptor" evidence="2 5">
    <location>
        <position position="397"/>
    </location>
</feature>
<feature type="binding site" evidence="2">
    <location>
        <begin position="284"/>
        <end position="292"/>
    </location>
    <ligand>
        <name>ATP</name>
        <dbReference type="ChEBI" id="CHEBI:30616"/>
    </ligand>
</feature>
<feature type="binding site" evidence="2">
    <location>
        <position position="306"/>
    </location>
    <ligand>
        <name>ATP</name>
        <dbReference type="ChEBI" id="CHEBI:30616"/>
    </ligand>
</feature>
<feature type="modified residue" description="Phosphotyrosine; by autocatalysis" evidence="1">
    <location>
        <position position="427"/>
    </location>
</feature>
<feature type="lipid moiety-binding region" description="N-myristoyl glycine" evidence="1">
    <location>
        <position position="2"/>
    </location>
</feature>
<protein>
    <recommendedName>
        <fullName>Tyrosine-protein kinase Yes</fullName>
        <ecNumber>2.7.10.2</ecNumber>
    </recommendedName>
    <alternativeName>
        <fullName>p61-Yes</fullName>
    </alternativeName>
</protein>
<keyword id="KW-0067">ATP-binding</keyword>
<keyword id="KW-0418">Kinase</keyword>
<keyword id="KW-0449">Lipoprotein</keyword>
<keyword id="KW-0519">Myristate</keyword>
<keyword id="KW-0547">Nucleotide-binding</keyword>
<keyword id="KW-0597">Phosphoprotein</keyword>
<keyword id="KW-0727">SH2 domain</keyword>
<keyword id="KW-0728">SH3 domain</keyword>
<keyword id="KW-0808">Transferase</keyword>
<keyword id="KW-0829">Tyrosine-protein kinase</keyword>
<dbReference type="EC" id="2.7.10.2"/>
<dbReference type="EMBL" id="X54970">
    <property type="protein sequence ID" value="CAA38714.1"/>
    <property type="molecule type" value="mRNA"/>
</dbReference>
<dbReference type="PIR" id="I51593">
    <property type="entry name" value="I51593"/>
</dbReference>
<dbReference type="SMR" id="P27447"/>
<dbReference type="BRENDA" id="2.7.10.2">
    <property type="organism ID" value="6732"/>
</dbReference>
<dbReference type="GO" id="GO:0005524">
    <property type="term" value="F:ATP binding"/>
    <property type="evidence" value="ECO:0007669"/>
    <property type="project" value="UniProtKB-KW"/>
</dbReference>
<dbReference type="GO" id="GO:0004715">
    <property type="term" value="F:non-membrane spanning protein tyrosine kinase activity"/>
    <property type="evidence" value="ECO:0007669"/>
    <property type="project" value="UniProtKB-EC"/>
</dbReference>
<dbReference type="CDD" id="cd05069">
    <property type="entry name" value="PTKc_Yes"/>
    <property type="match status" value="1"/>
</dbReference>
<dbReference type="CDD" id="cd09933">
    <property type="entry name" value="SH2_Src_family"/>
    <property type="match status" value="1"/>
</dbReference>
<dbReference type="CDD" id="cd12007">
    <property type="entry name" value="SH3_Yes"/>
    <property type="match status" value="1"/>
</dbReference>
<dbReference type="FunFam" id="1.10.510.10:FF:000553">
    <property type="entry name" value="Tyrosine-protein kinase"/>
    <property type="match status" value="1"/>
</dbReference>
<dbReference type="FunFam" id="2.30.30.40:FF:000022">
    <property type="entry name" value="Tyrosine-protein kinase"/>
    <property type="match status" value="1"/>
</dbReference>
<dbReference type="FunFam" id="3.30.200.20:FF:000016">
    <property type="entry name" value="Tyrosine-protein kinase"/>
    <property type="match status" value="1"/>
</dbReference>
<dbReference type="FunFam" id="3.30.505.10:FF:000001">
    <property type="entry name" value="Tyrosine-protein kinase"/>
    <property type="match status" value="1"/>
</dbReference>
<dbReference type="Gene3D" id="3.30.200.20">
    <property type="entry name" value="Phosphorylase Kinase, domain 1"/>
    <property type="match status" value="1"/>
</dbReference>
<dbReference type="Gene3D" id="3.30.505.10">
    <property type="entry name" value="SH2 domain"/>
    <property type="match status" value="1"/>
</dbReference>
<dbReference type="Gene3D" id="2.30.30.40">
    <property type="entry name" value="SH3 Domains"/>
    <property type="match status" value="1"/>
</dbReference>
<dbReference type="Gene3D" id="1.10.510.10">
    <property type="entry name" value="Transferase(Phosphotransferase) domain 1"/>
    <property type="match status" value="1"/>
</dbReference>
<dbReference type="InterPro" id="IPR011009">
    <property type="entry name" value="Kinase-like_dom_sf"/>
</dbReference>
<dbReference type="InterPro" id="IPR050198">
    <property type="entry name" value="Non-receptor_tyrosine_kinases"/>
</dbReference>
<dbReference type="InterPro" id="IPR000719">
    <property type="entry name" value="Prot_kinase_dom"/>
</dbReference>
<dbReference type="InterPro" id="IPR017441">
    <property type="entry name" value="Protein_kinase_ATP_BS"/>
</dbReference>
<dbReference type="InterPro" id="IPR001245">
    <property type="entry name" value="Ser-Thr/Tyr_kinase_cat_dom"/>
</dbReference>
<dbReference type="InterPro" id="IPR000980">
    <property type="entry name" value="SH2"/>
</dbReference>
<dbReference type="InterPro" id="IPR036860">
    <property type="entry name" value="SH2_dom_sf"/>
</dbReference>
<dbReference type="InterPro" id="IPR036028">
    <property type="entry name" value="SH3-like_dom_sf"/>
</dbReference>
<dbReference type="InterPro" id="IPR001452">
    <property type="entry name" value="SH3_domain"/>
</dbReference>
<dbReference type="InterPro" id="IPR008266">
    <property type="entry name" value="Tyr_kinase_AS"/>
</dbReference>
<dbReference type="InterPro" id="IPR020635">
    <property type="entry name" value="Tyr_kinase_cat_dom"/>
</dbReference>
<dbReference type="InterPro" id="IPR035751">
    <property type="entry name" value="Yes_SH3"/>
</dbReference>
<dbReference type="PANTHER" id="PTHR24418">
    <property type="entry name" value="TYROSINE-PROTEIN KINASE"/>
    <property type="match status" value="1"/>
</dbReference>
<dbReference type="Pfam" id="PF07714">
    <property type="entry name" value="PK_Tyr_Ser-Thr"/>
    <property type="match status" value="1"/>
</dbReference>
<dbReference type="Pfam" id="PF00017">
    <property type="entry name" value="SH2"/>
    <property type="match status" value="1"/>
</dbReference>
<dbReference type="Pfam" id="PF00018">
    <property type="entry name" value="SH3_1"/>
    <property type="match status" value="1"/>
</dbReference>
<dbReference type="PRINTS" id="PR00401">
    <property type="entry name" value="SH2DOMAIN"/>
</dbReference>
<dbReference type="PRINTS" id="PR00452">
    <property type="entry name" value="SH3DOMAIN"/>
</dbReference>
<dbReference type="PRINTS" id="PR00109">
    <property type="entry name" value="TYRKINASE"/>
</dbReference>
<dbReference type="SMART" id="SM00252">
    <property type="entry name" value="SH2"/>
    <property type="match status" value="1"/>
</dbReference>
<dbReference type="SMART" id="SM00326">
    <property type="entry name" value="SH3"/>
    <property type="match status" value="1"/>
</dbReference>
<dbReference type="SMART" id="SM00219">
    <property type="entry name" value="TyrKc"/>
    <property type="match status" value="1"/>
</dbReference>
<dbReference type="SUPFAM" id="SSF56112">
    <property type="entry name" value="Protein kinase-like (PK-like)"/>
    <property type="match status" value="1"/>
</dbReference>
<dbReference type="SUPFAM" id="SSF55550">
    <property type="entry name" value="SH2 domain"/>
    <property type="match status" value="1"/>
</dbReference>
<dbReference type="SUPFAM" id="SSF50044">
    <property type="entry name" value="SH3-domain"/>
    <property type="match status" value="1"/>
</dbReference>
<dbReference type="PROSITE" id="PS00107">
    <property type="entry name" value="PROTEIN_KINASE_ATP"/>
    <property type="match status" value="1"/>
</dbReference>
<dbReference type="PROSITE" id="PS50011">
    <property type="entry name" value="PROTEIN_KINASE_DOM"/>
    <property type="match status" value="1"/>
</dbReference>
<dbReference type="PROSITE" id="PS00109">
    <property type="entry name" value="PROTEIN_KINASE_TYR"/>
    <property type="match status" value="1"/>
</dbReference>
<dbReference type="PROSITE" id="PS50001">
    <property type="entry name" value="SH2"/>
    <property type="match status" value="1"/>
</dbReference>
<dbReference type="PROSITE" id="PS50002">
    <property type="entry name" value="SH3"/>
    <property type="match status" value="1"/>
</dbReference>
<gene>
    <name type="primary">yes</name>
</gene>
<accession>P27447</accession>
<evidence type="ECO:0000250" key="1"/>
<evidence type="ECO:0000255" key="2">
    <source>
        <dbReference type="PROSITE-ProRule" id="PRU00159"/>
    </source>
</evidence>
<evidence type="ECO:0000255" key="3">
    <source>
        <dbReference type="PROSITE-ProRule" id="PRU00191"/>
    </source>
</evidence>
<evidence type="ECO:0000255" key="4">
    <source>
        <dbReference type="PROSITE-ProRule" id="PRU00192"/>
    </source>
</evidence>
<evidence type="ECO:0000255" key="5">
    <source>
        <dbReference type="PROSITE-ProRule" id="PRU10028"/>
    </source>
</evidence>
<organism>
    <name type="scientific">Xiphophorus hellerii</name>
    <name type="common">Green swordtail</name>
    <dbReference type="NCBI Taxonomy" id="8084"/>
    <lineage>
        <taxon>Eukaryota</taxon>
        <taxon>Metazoa</taxon>
        <taxon>Chordata</taxon>
        <taxon>Craniata</taxon>
        <taxon>Vertebrata</taxon>
        <taxon>Euteleostomi</taxon>
        <taxon>Actinopterygii</taxon>
        <taxon>Neopterygii</taxon>
        <taxon>Teleostei</taxon>
        <taxon>Neoteleostei</taxon>
        <taxon>Acanthomorphata</taxon>
        <taxon>Ovalentaria</taxon>
        <taxon>Atherinomorphae</taxon>
        <taxon>Cyprinodontiformes</taxon>
        <taxon>Poeciliidae</taxon>
        <taxon>Poeciliinae</taxon>
        <taxon>Xiphophorus</taxon>
    </lineage>
</organism>
<reference key="1">
    <citation type="journal article" date="1991" name="Oncogene">
        <title>Conservation of structure and expression of the c-yes and fyn genes in lower vertebrates.</title>
        <authorList>
            <person name="Hannig G."/>
            <person name="Ottilie S."/>
            <person name="Schartl M."/>
        </authorList>
    </citation>
    <scope>NUCLEOTIDE SEQUENCE [MRNA]</scope>
    <source>
        <strain>Rio Lancetilla</strain>
    </source>
</reference>
<name>YES_XIPHE</name>
<proteinExistence type="evidence at transcript level"/>
<sequence length="544" mass="61289">MGCVRSKEAKGPALKYQPDNSNVVPVSAHLGHYGPEPTIMGQSPAMKTQNNSHPTALSPFGGVSSPMTPFGGASTSFTSVTVNNPFPAVITGGVTFFVALYDYEARTSDDLSFRKGDRFQIINNTEGDWWEARSINTGENGYIPSNYVAPADSIQSEEWYFGKLSRKDTERLLLLPGNERGTFLIRESETTKGAYSLSLRDWDETKGDNCKHYKIRKLDNGGYYITTRTQFMSLQMLVKHYTEHVDGLCYKLTTVCPQVKPQTQGIAKDAWEIPRESLRLDVRLGQGCFGEVWMGTWNGTTKVAIKTLKPGTMSPEAFLEEAQIMKKLRHDKLVPLYAVVSEEPIYIVTEFMGKGSLLDFLKEGDGKHLKLPQLVDMASQIADGMAFIERMNYIHRDLRAANILVADNLVCKIADFGLARLIEDNEYTARQGAKFPIKWTAPEAALYGRFTIKSDVWSFGILLTELVTKGRVPYPGMVNREVLEQVDRGYRMPCPQGCPESLHEMMRQCWKKEPDERPTFEYIQSFLEDYFTATEPQYQPGDNL</sequence>
<comment type="catalytic activity">
    <reaction evidence="5">
        <text>L-tyrosyl-[protein] + ATP = O-phospho-L-tyrosyl-[protein] + ADP + H(+)</text>
        <dbReference type="Rhea" id="RHEA:10596"/>
        <dbReference type="Rhea" id="RHEA-COMP:10136"/>
        <dbReference type="Rhea" id="RHEA-COMP:20101"/>
        <dbReference type="ChEBI" id="CHEBI:15378"/>
        <dbReference type="ChEBI" id="CHEBI:30616"/>
        <dbReference type="ChEBI" id="CHEBI:46858"/>
        <dbReference type="ChEBI" id="CHEBI:61978"/>
        <dbReference type="ChEBI" id="CHEBI:456216"/>
        <dbReference type="EC" id="2.7.10.2"/>
    </reaction>
</comment>
<comment type="similarity">
    <text evidence="2">Belongs to the protein kinase superfamily. Tyr protein kinase family. SRC subfamily.</text>
</comment>